<evidence type="ECO:0000255" key="1">
    <source>
        <dbReference type="HAMAP-Rule" id="MF_00267"/>
    </source>
</evidence>
<evidence type="ECO:0000256" key="2">
    <source>
        <dbReference type="SAM" id="MobiDB-lite"/>
    </source>
</evidence>
<organism>
    <name type="scientific">Prochlorococcus marinus (strain MIT 9313)</name>
    <dbReference type="NCBI Taxonomy" id="74547"/>
    <lineage>
        <taxon>Bacteria</taxon>
        <taxon>Bacillati</taxon>
        <taxon>Cyanobacteriota</taxon>
        <taxon>Cyanophyceae</taxon>
        <taxon>Synechococcales</taxon>
        <taxon>Prochlorococcaceae</taxon>
        <taxon>Prochlorococcus</taxon>
    </lineage>
</organism>
<comment type="function">
    <text evidence="1">Cell division inhibitor that blocks the formation of polar Z ring septums. Rapidly oscillates between the poles of the cell to destabilize FtsZ filaments that have formed before they mature into polar Z rings. Prevents FtsZ polymerization.</text>
</comment>
<comment type="subunit">
    <text evidence="1">Interacts with MinD and FtsZ.</text>
</comment>
<comment type="similarity">
    <text evidence="1">Belongs to the MinC family.</text>
</comment>
<dbReference type="EMBL" id="BX548175">
    <property type="protein sequence ID" value="CAE21827.1"/>
    <property type="molecule type" value="Genomic_DNA"/>
</dbReference>
<dbReference type="RefSeq" id="WP_011131019.1">
    <property type="nucleotide sequence ID" value="NC_005071.1"/>
</dbReference>
<dbReference type="SMR" id="Q7V5B7"/>
<dbReference type="KEGG" id="pmt:PMT_1652"/>
<dbReference type="eggNOG" id="COG0850">
    <property type="taxonomic scope" value="Bacteria"/>
</dbReference>
<dbReference type="HOGENOM" id="CLU_048711_0_2_3"/>
<dbReference type="OrthoDB" id="9790810at2"/>
<dbReference type="Proteomes" id="UP000001423">
    <property type="component" value="Chromosome"/>
</dbReference>
<dbReference type="GO" id="GO:0000902">
    <property type="term" value="P:cell morphogenesis"/>
    <property type="evidence" value="ECO:0007669"/>
    <property type="project" value="InterPro"/>
</dbReference>
<dbReference type="GO" id="GO:0000917">
    <property type="term" value="P:division septum assembly"/>
    <property type="evidence" value="ECO:0007669"/>
    <property type="project" value="UniProtKB-KW"/>
</dbReference>
<dbReference type="GO" id="GO:1901891">
    <property type="term" value="P:regulation of cell septum assembly"/>
    <property type="evidence" value="ECO:0007669"/>
    <property type="project" value="InterPro"/>
</dbReference>
<dbReference type="Gene3D" id="2.160.20.70">
    <property type="match status" value="1"/>
</dbReference>
<dbReference type="HAMAP" id="MF_00267">
    <property type="entry name" value="MinC"/>
    <property type="match status" value="1"/>
</dbReference>
<dbReference type="InterPro" id="IPR016098">
    <property type="entry name" value="CAP/MinC_C"/>
</dbReference>
<dbReference type="InterPro" id="IPR013033">
    <property type="entry name" value="MinC"/>
</dbReference>
<dbReference type="InterPro" id="IPR036145">
    <property type="entry name" value="MinC_C_sf"/>
</dbReference>
<dbReference type="InterPro" id="IPR005526">
    <property type="entry name" value="Septum_form_inhib_MinC_C"/>
</dbReference>
<dbReference type="NCBIfam" id="TIGR01222">
    <property type="entry name" value="minC"/>
    <property type="match status" value="1"/>
</dbReference>
<dbReference type="PANTHER" id="PTHR34108">
    <property type="entry name" value="SEPTUM SITE-DETERMINING PROTEIN MINC"/>
    <property type="match status" value="1"/>
</dbReference>
<dbReference type="PANTHER" id="PTHR34108:SF1">
    <property type="entry name" value="SEPTUM SITE-DETERMINING PROTEIN MINC"/>
    <property type="match status" value="1"/>
</dbReference>
<dbReference type="Pfam" id="PF03775">
    <property type="entry name" value="MinC_C"/>
    <property type="match status" value="1"/>
</dbReference>
<dbReference type="SUPFAM" id="SSF63848">
    <property type="entry name" value="Cell-division inhibitor MinC, C-terminal domain"/>
    <property type="match status" value="1"/>
</dbReference>
<sequence length="225" mass="24685">MEIEVGEPEAQRLKLPWCREAHWRETLPAMLNELDPGPIELDCRDWQLGCRDLHQLRELLNKEGVTLTRIHANLRETLVSAAALGYPTHMASPQGNSSKTRSSDTQPKPKTPQKLLFHQGTLRSGDHLSAEGDVLLLGDVNPGARISAGGDVMVWGRLRGIAHAGQDGDTKAKIVALQLRPLQLRIADAVARGPEDQPQPGLAEEARLEGDTIMIEPARANRFNG</sequence>
<proteinExistence type="inferred from homology"/>
<accession>Q7V5B7</accession>
<protein>
    <recommendedName>
        <fullName evidence="1">Probable septum site-determining protein MinC</fullName>
    </recommendedName>
</protein>
<feature type="chain" id="PRO_0000189052" description="Probable septum site-determining protein MinC">
    <location>
        <begin position="1"/>
        <end position="225"/>
    </location>
</feature>
<feature type="region of interest" description="Disordered" evidence="2">
    <location>
        <begin position="87"/>
        <end position="112"/>
    </location>
</feature>
<feature type="compositionally biased region" description="Polar residues" evidence="2">
    <location>
        <begin position="91"/>
        <end position="108"/>
    </location>
</feature>
<keyword id="KW-0131">Cell cycle</keyword>
<keyword id="KW-0132">Cell division</keyword>
<keyword id="KW-1185">Reference proteome</keyword>
<keyword id="KW-0717">Septation</keyword>
<gene>
    <name evidence="1" type="primary">minC</name>
    <name type="ordered locus">PMT_1652</name>
</gene>
<name>MINC_PROMM</name>
<reference key="1">
    <citation type="journal article" date="2003" name="Nature">
        <title>Genome divergence in two Prochlorococcus ecotypes reflects oceanic niche differentiation.</title>
        <authorList>
            <person name="Rocap G."/>
            <person name="Larimer F.W."/>
            <person name="Lamerdin J.E."/>
            <person name="Malfatti S."/>
            <person name="Chain P."/>
            <person name="Ahlgren N.A."/>
            <person name="Arellano A."/>
            <person name="Coleman M."/>
            <person name="Hauser L."/>
            <person name="Hess W.R."/>
            <person name="Johnson Z.I."/>
            <person name="Land M.L."/>
            <person name="Lindell D."/>
            <person name="Post A.F."/>
            <person name="Regala W."/>
            <person name="Shah M."/>
            <person name="Shaw S.L."/>
            <person name="Steglich C."/>
            <person name="Sullivan M.B."/>
            <person name="Ting C.S."/>
            <person name="Tolonen A."/>
            <person name="Webb E.A."/>
            <person name="Zinser E.R."/>
            <person name="Chisholm S.W."/>
        </authorList>
    </citation>
    <scope>NUCLEOTIDE SEQUENCE [LARGE SCALE GENOMIC DNA]</scope>
    <source>
        <strain>MIT 9313</strain>
    </source>
</reference>